<accession>Q7N9B3</accession>
<proteinExistence type="inferred from homology"/>
<protein>
    <recommendedName>
        <fullName evidence="1">Small ribosomal subunit protein uS7</fullName>
    </recommendedName>
    <alternativeName>
        <fullName evidence="2">30S ribosomal protein S7</fullName>
    </alternativeName>
</protein>
<comment type="function">
    <text evidence="1">One of the primary rRNA binding proteins, it binds directly to 16S rRNA where it nucleates assembly of the head domain of the 30S subunit. Is located at the subunit interface close to the decoding center, probably blocks exit of the E-site tRNA.</text>
</comment>
<comment type="subunit">
    <text evidence="1">Part of the 30S ribosomal subunit. Contacts proteins S9 and S11.</text>
</comment>
<comment type="similarity">
    <text evidence="1">Belongs to the universal ribosomal protein uS7 family.</text>
</comment>
<feature type="chain" id="PRO_0000124315" description="Small ribosomal subunit protein uS7">
    <location>
        <begin position="1"/>
        <end position="156"/>
    </location>
</feature>
<dbReference type="EMBL" id="BX571860">
    <property type="protein sequence ID" value="CAE12725.1"/>
    <property type="molecule type" value="Genomic_DNA"/>
</dbReference>
<dbReference type="RefSeq" id="WP_011144816.1">
    <property type="nucleotide sequence ID" value="NC_005126.1"/>
</dbReference>
<dbReference type="SMR" id="Q7N9B3"/>
<dbReference type="STRING" id="243265.plu0430"/>
<dbReference type="GeneID" id="88806578"/>
<dbReference type="KEGG" id="plu:plu0430"/>
<dbReference type="eggNOG" id="COG0049">
    <property type="taxonomic scope" value="Bacteria"/>
</dbReference>
<dbReference type="HOGENOM" id="CLU_072226_1_1_6"/>
<dbReference type="OrthoDB" id="9807653at2"/>
<dbReference type="Proteomes" id="UP000002514">
    <property type="component" value="Chromosome"/>
</dbReference>
<dbReference type="GO" id="GO:0015935">
    <property type="term" value="C:small ribosomal subunit"/>
    <property type="evidence" value="ECO:0007669"/>
    <property type="project" value="InterPro"/>
</dbReference>
<dbReference type="GO" id="GO:0019843">
    <property type="term" value="F:rRNA binding"/>
    <property type="evidence" value="ECO:0007669"/>
    <property type="project" value="UniProtKB-UniRule"/>
</dbReference>
<dbReference type="GO" id="GO:0003735">
    <property type="term" value="F:structural constituent of ribosome"/>
    <property type="evidence" value="ECO:0007669"/>
    <property type="project" value="InterPro"/>
</dbReference>
<dbReference type="GO" id="GO:0000049">
    <property type="term" value="F:tRNA binding"/>
    <property type="evidence" value="ECO:0007669"/>
    <property type="project" value="UniProtKB-UniRule"/>
</dbReference>
<dbReference type="GO" id="GO:0006412">
    <property type="term" value="P:translation"/>
    <property type="evidence" value="ECO:0007669"/>
    <property type="project" value="UniProtKB-UniRule"/>
</dbReference>
<dbReference type="CDD" id="cd14869">
    <property type="entry name" value="uS7_Bacteria"/>
    <property type="match status" value="1"/>
</dbReference>
<dbReference type="FunFam" id="1.10.455.10:FF:000001">
    <property type="entry name" value="30S ribosomal protein S7"/>
    <property type="match status" value="1"/>
</dbReference>
<dbReference type="Gene3D" id="1.10.455.10">
    <property type="entry name" value="Ribosomal protein S7 domain"/>
    <property type="match status" value="1"/>
</dbReference>
<dbReference type="HAMAP" id="MF_00480_B">
    <property type="entry name" value="Ribosomal_uS7_B"/>
    <property type="match status" value="1"/>
</dbReference>
<dbReference type="InterPro" id="IPR000235">
    <property type="entry name" value="Ribosomal_uS7"/>
</dbReference>
<dbReference type="InterPro" id="IPR005717">
    <property type="entry name" value="Ribosomal_uS7_bac/org-type"/>
</dbReference>
<dbReference type="InterPro" id="IPR020606">
    <property type="entry name" value="Ribosomal_uS7_CS"/>
</dbReference>
<dbReference type="InterPro" id="IPR023798">
    <property type="entry name" value="Ribosomal_uS7_dom"/>
</dbReference>
<dbReference type="InterPro" id="IPR036823">
    <property type="entry name" value="Ribosomal_uS7_dom_sf"/>
</dbReference>
<dbReference type="NCBIfam" id="TIGR01029">
    <property type="entry name" value="rpsG_bact"/>
    <property type="match status" value="1"/>
</dbReference>
<dbReference type="PANTHER" id="PTHR11205">
    <property type="entry name" value="RIBOSOMAL PROTEIN S7"/>
    <property type="match status" value="1"/>
</dbReference>
<dbReference type="Pfam" id="PF00177">
    <property type="entry name" value="Ribosomal_S7"/>
    <property type="match status" value="1"/>
</dbReference>
<dbReference type="PIRSF" id="PIRSF002122">
    <property type="entry name" value="RPS7p_RPS7a_RPS5e_RPS7o"/>
    <property type="match status" value="1"/>
</dbReference>
<dbReference type="SUPFAM" id="SSF47973">
    <property type="entry name" value="Ribosomal protein S7"/>
    <property type="match status" value="1"/>
</dbReference>
<dbReference type="PROSITE" id="PS00052">
    <property type="entry name" value="RIBOSOMAL_S7"/>
    <property type="match status" value="1"/>
</dbReference>
<sequence length="156" mass="17638">MPRRRVIGQRKILPDPKFGSELLAKFVNILMVDGKKSTAEAIVYSALETLAQRSGKEHLEAFELALDNVRPTVEVKSRRVGGSTYQVPVEVRPVRRNALAMRWIVEAARKRGDKSMALRLANELSDAAENKGTAVKKREDVHRMAEANKAFAHYRW</sequence>
<evidence type="ECO:0000255" key="1">
    <source>
        <dbReference type="HAMAP-Rule" id="MF_00480"/>
    </source>
</evidence>
<evidence type="ECO:0000305" key="2"/>
<reference key="1">
    <citation type="journal article" date="2003" name="Nat. Biotechnol.">
        <title>The genome sequence of the entomopathogenic bacterium Photorhabdus luminescens.</title>
        <authorList>
            <person name="Duchaud E."/>
            <person name="Rusniok C."/>
            <person name="Frangeul L."/>
            <person name="Buchrieser C."/>
            <person name="Givaudan A."/>
            <person name="Taourit S."/>
            <person name="Bocs S."/>
            <person name="Boursaux-Eude C."/>
            <person name="Chandler M."/>
            <person name="Charles J.-F."/>
            <person name="Dassa E."/>
            <person name="Derose R."/>
            <person name="Derzelle S."/>
            <person name="Freyssinet G."/>
            <person name="Gaudriault S."/>
            <person name="Medigue C."/>
            <person name="Lanois A."/>
            <person name="Powell K."/>
            <person name="Siguier P."/>
            <person name="Vincent R."/>
            <person name="Wingate V."/>
            <person name="Zouine M."/>
            <person name="Glaser P."/>
            <person name="Boemare N."/>
            <person name="Danchin A."/>
            <person name="Kunst F."/>
        </authorList>
    </citation>
    <scope>NUCLEOTIDE SEQUENCE [LARGE SCALE GENOMIC DNA]</scope>
    <source>
        <strain>DSM 15139 / CIP 105565 / TT01</strain>
    </source>
</reference>
<keyword id="KW-1185">Reference proteome</keyword>
<keyword id="KW-0687">Ribonucleoprotein</keyword>
<keyword id="KW-0689">Ribosomal protein</keyword>
<keyword id="KW-0694">RNA-binding</keyword>
<keyword id="KW-0699">rRNA-binding</keyword>
<keyword id="KW-0820">tRNA-binding</keyword>
<name>RS7_PHOLL</name>
<gene>
    <name evidence="1" type="primary">rpsG</name>
    <name type="ordered locus">plu0430</name>
</gene>
<organism>
    <name type="scientific">Photorhabdus laumondii subsp. laumondii (strain DSM 15139 / CIP 105565 / TT01)</name>
    <name type="common">Photorhabdus luminescens subsp. laumondii</name>
    <dbReference type="NCBI Taxonomy" id="243265"/>
    <lineage>
        <taxon>Bacteria</taxon>
        <taxon>Pseudomonadati</taxon>
        <taxon>Pseudomonadota</taxon>
        <taxon>Gammaproteobacteria</taxon>
        <taxon>Enterobacterales</taxon>
        <taxon>Morganellaceae</taxon>
        <taxon>Photorhabdus</taxon>
    </lineage>
</organism>